<protein>
    <recommendedName>
        <fullName evidence="1">Glycine cleavage system H protein</fullName>
    </recommendedName>
</protein>
<dbReference type="EMBL" id="BA000030">
    <property type="protein sequence ID" value="BAC70485.1"/>
    <property type="molecule type" value="Genomic_DNA"/>
</dbReference>
<dbReference type="RefSeq" id="WP_010984206.1">
    <property type="nucleotide sequence ID" value="NZ_JZJK01000071.1"/>
</dbReference>
<dbReference type="SMR" id="Q82JI1"/>
<dbReference type="GeneID" id="41539861"/>
<dbReference type="KEGG" id="sma:SAVERM_2774"/>
<dbReference type="eggNOG" id="COG0509">
    <property type="taxonomic scope" value="Bacteria"/>
</dbReference>
<dbReference type="HOGENOM" id="CLU_097408_2_2_11"/>
<dbReference type="OrthoDB" id="9796712at2"/>
<dbReference type="Proteomes" id="UP000000428">
    <property type="component" value="Chromosome"/>
</dbReference>
<dbReference type="GO" id="GO:0005829">
    <property type="term" value="C:cytosol"/>
    <property type="evidence" value="ECO:0007669"/>
    <property type="project" value="TreeGrafter"/>
</dbReference>
<dbReference type="GO" id="GO:0005960">
    <property type="term" value="C:glycine cleavage complex"/>
    <property type="evidence" value="ECO:0007669"/>
    <property type="project" value="InterPro"/>
</dbReference>
<dbReference type="GO" id="GO:0019464">
    <property type="term" value="P:glycine decarboxylation via glycine cleavage system"/>
    <property type="evidence" value="ECO:0007669"/>
    <property type="project" value="UniProtKB-UniRule"/>
</dbReference>
<dbReference type="CDD" id="cd06848">
    <property type="entry name" value="GCS_H"/>
    <property type="match status" value="1"/>
</dbReference>
<dbReference type="Gene3D" id="2.40.50.100">
    <property type="match status" value="1"/>
</dbReference>
<dbReference type="HAMAP" id="MF_00272">
    <property type="entry name" value="GcvH"/>
    <property type="match status" value="1"/>
</dbReference>
<dbReference type="InterPro" id="IPR003016">
    <property type="entry name" value="2-oxoA_DH_lipoyl-BS"/>
</dbReference>
<dbReference type="InterPro" id="IPR000089">
    <property type="entry name" value="Biotin_lipoyl"/>
</dbReference>
<dbReference type="InterPro" id="IPR002930">
    <property type="entry name" value="GCV_H"/>
</dbReference>
<dbReference type="InterPro" id="IPR033753">
    <property type="entry name" value="GCV_H/Fam206"/>
</dbReference>
<dbReference type="InterPro" id="IPR017453">
    <property type="entry name" value="GCV_H_sub"/>
</dbReference>
<dbReference type="InterPro" id="IPR011053">
    <property type="entry name" value="Single_hybrid_motif"/>
</dbReference>
<dbReference type="NCBIfam" id="TIGR00527">
    <property type="entry name" value="gcvH"/>
    <property type="match status" value="1"/>
</dbReference>
<dbReference type="NCBIfam" id="NF002270">
    <property type="entry name" value="PRK01202.1"/>
    <property type="match status" value="1"/>
</dbReference>
<dbReference type="PANTHER" id="PTHR11715">
    <property type="entry name" value="GLYCINE CLEAVAGE SYSTEM H PROTEIN"/>
    <property type="match status" value="1"/>
</dbReference>
<dbReference type="PANTHER" id="PTHR11715:SF3">
    <property type="entry name" value="GLYCINE CLEAVAGE SYSTEM H PROTEIN-RELATED"/>
    <property type="match status" value="1"/>
</dbReference>
<dbReference type="Pfam" id="PF01597">
    <property type="entry name" value="GCV_H"/>
    <property type="match status" value="1"/>
</dbReference>
<dbReference type="SUPFAM" id="SSF51230">
    <property type="entry name" value="Single hybrid motif"/>
    <property type="match status" value="1"/>
</dbReference>
<dbReference type="PROSITE" id="PS50968">
    <property type="entry name" value="BIOTINYL_LIPOYL"/>
    <property type="match status" value="1"/>
</dbReference>
<dbReference type="PROSITE" id="PS00189">
    <property type="entry name" value="LIPOYL"/>
    <property type="match status" value="1"/>
</dbReference>
<comment type="function">
    <text evidence="1">The glycine cleavage system catalyzes the degradation of glycine. The H protein shuttles the methylamine group of glycine from the P protein to the T protein.</text>
</comment>
<comment type="cofactor">
    <cofactor evidence="1">
        <name>(R)-lipoate</name>
        <dbReference type="ChEBI" id="CHEBI:83088"/>
    </cofactor>
    <text evidence="1">Binds 1 lipoyl cofactor covalently.</text>
</comment>
<comment type="subunit">
    <text evidence="1">The glycine cleavage system is composed of four proteins: P, T, L and H.</text>
</comment>
<comment type="similarity">
    <text evidence="1">Belongs to the GcvH family.</text>
</comment>
<organism>
    <name type="scientific">Streptomyces avermitilis (strain ATCC 31267 / DSM 46492 / JCM 5070 / NBRC 14893 / NCIMB 12804 / NRRL 8165 / MA-4680)</name>
    <dbReference type="NCBI Taxonomy" id="227882"/>
    <lineage>
        <taxon>Bacteria</taxon>
        <taxon>Bacillati</taxon>
        <taxon>Actinomycetota</taxon>
        <taxon>Actinomycetes</taxon>
        <taxon>Kitasatosporales</taxon>
        <taxon>Streptomycetaceae</taxon>
        <taxon>Streptomyces</taxon>
    </lineage>
</organism>
<evidence type="ECO:0000255" key="1">
    <source>
        <dbReference type="HAMAP-Rule" id="MF_00272"/>
    </source>
</evidence>
<evidence type="ECO:0000255" key="2">
    <source>
        <dbReference type="PROSITE-ProRule" id="PRU01066"/>
    </source>
</evidence>
<proteinExistence type="inferred from homology"/>
<keyword id="KW-0450">Lipoyl</keyword>
<keyword id="KW-1185">Reference proteome</keyword>
<sequence>MSNPQQLRYSKEHEWLSGAEDGVSTVGITEHAANALGDVVYVQLPEVGDTVTAGETCGELESTKSVSDLYSPVTGEVVEANQDVVDDPSLVNSAPFEGGWLFKVRVAEEPKDLLSADEYTEFSGS</sequence>
<gene>
    <name evidence="1" type="primary">gcvH</name>
    <name type="ordered locus">SAV_2774</name>
</gene>
<reference key="1">
    <citation type="journal article" date="2001" name="Proc. Natl. Acad. Sci. U.S.A.">
        <title>Genome sequence of an industrial microorganism Streptomyces avermitilis: deducing the ability of producing secondary metabolites.</title>
        <authorList>
            <person name="Omura S."/>
            <person name="Ikeda H."/>
            <person name="Ishikawa J."/>
            <person name="Hanamoto A."/>
            <person name="Takahashi C."/>
            <person name="Shinose M."/>
            <person name="Takahashi Y."/>
            <person name="Horikawa H."/>
            <person name="Nakazawa H."/>
            <person name="Osonoe T."/>
            <person name="Kikuchi H."/>
            <person name="Shiba T."/>
            <person name="Sakaki Y."/>
            <person name="Hattori M."/>
        </authorList>
    </citation>
    <scope>NUCLEOTIDE SEQUENCE [LARGE SCALE GENOMIC DNA]</scope>
    <source>
        <strain>ATCC 31267 / DSM 46492 / JCM 5070 / NBRC 14893 / NCIMB 12804 / NRRL 8165 / MA-4680</strain>
    </source>
</reference>
<reference key="2">
    <citation type="journal article" date="2003" name="Nat. Biotechnol.">
        <title>Complete genome sequence and comparative analysis of the industrial microorganism Streptomyces avermitilis.</title>
        <authorList>
            <person name="Ikeda H."/>
            <person name="Ishikawa J."/>
            <person name="Hanamoto A."/>
            <person name="Shinose M."/>
            <person name="Kikuchi H."/>
            <person name="Shiba T."/>
            <person name="Sakaki Y."/>
            <person name="Hattori M."/>
            <person name="Omura S."/>
        </authorList>
    </citation>
    <scope>NUCLEOTIDE SEQUENCE [LARGE SCALE GENOMIC DNA]</scope>
    <source>
        <strain>ATCC 31267 / DSM 46492 / JCM 5070 / NBRC 14893 / NCIMB 12804 / NRRL 8165 / MA-4680</strain>
    </source>
</reference>
<name>GCSH_STRAW</name>
<feature type="chain" id="PRO_0000166254" description="Glycine cleavage system H protein">
    <location>
        <begin position="1"/>
        <end position="125"/>
    </location>
</feature>
<feature type="domain" description="Lipoyl-binding" evidence="2">
    <location>
        <begin position="23"/>
        <end position="105"/>
    </location>
</feature>
<feature type="modified residue" description="N6-lipoyllysine" evidence="1">
    <location>
        <position position="64"/>
    </location>
</feature>
<accession>Q82JI1</accession>